<feature type="chain" id="PRO_1000072040" description="Chaperone protein DnaK">
    <location>
        <begin position="1"/>
        <end position="641"/>
    </location>
</feature>
<feature type="region of interest" description="Disordered" evidence="2">
    <location>
        <begin position="605"/>
        <end position="626"/>
    </location>
</feature>
<feature type="compositionally biased region" description="Low complexity" evidence="2">
    <location>
        <begin position="605"/>
        <end position="621"/>
    </location>
</feature>
<feature type="modified residue" description="Phosphothreonine; by autocatalysis" evidence="1">
    <location>
        <position position="198"/>
    </location>
</feature>
<proteinExistence type="inferred from homology"/>
<dbReference type="EMBL" id="CP000713">
    <property type="protein sequence ID" value="ABQ95311.1"/>
    <property type="molecule type" value="Genomic_DNA"/>
</dbReference>
<dbReference type="SMR" id="A5WI20"/>
<dbReference type="STRING" id="349106.PsycPRwf_2371"/>
<dbReference type="KEGG" id="prw:PsycPRwf_2371"/>
<dbReference type="eggNOG" id="COG0443">
    <property type="taxonomic scope" value="Bacteria"/>
</dbReference>
<dbReference type="HOGENOM" id="CLU_005965_2_4_6"/>
<dbReference type="GO" id="GO:0005524">
    <property type="term" value="F:ATP binding"/>
    <property type="evidence" value="ECO:0007669"/>
    <property type="project" value="UniProtKB-UniRule"/>
</dbReference>
<dbReference type="GO" id="GO:0140662">
    <property type="term" value="F:ATP-dependent protein folding chaperone"/>
    <property type="evidence" value="ECO:0007669"/>
    <property type="project" value="InterPro"/>
</dbReference>
<dbReference type="GO" id="GO:0051082">
    <property type="term" value="F:unfolded protein binding"/>
    <property type="evidence" value="ECO:0007669"/>
    <property type="project" value="InterPro"/>
</dbReference>
<dbReference type="CDD" id="cd10234">
    <property type="entry name" value="ASKHA_NBD_HSP70_DnaK-like"/>
    <property type="match status" value="1"/>
</dbReference>
<dbReference type="FunFam" id="2.60.34.10:FF:000014">
    <property type="entry name" value="Chaperone protein DnaK HSP70"/>
    <property type="match status" value="1"/>
</dbReference>
<dbReference type="FunFam" id="1.20.1270.10:FF:000001">
    <property type="entry name" value="Molecular chaperone DnaK"/>
    <property type="match status" value="1"/>
</dbReference>
<dbReference type="FunFam" id="3.30.420.40:FF:000004">
    <property type="entry name" value="Molecular chaperone DnaK"/>
    <property type="match status" value="1"/>
</dbReference>
<dbReference type="FunFam" id="3.90.640.10:FF:000003">
    <property type="entry name" value="Molecular chaperone DnaK"/>
    <property type="match status" value="1"/>
</dbReference>
<dbReference type="Gene3D" id="1.20.1270.10">
    <property type="match status" value="1"/>
</dbReference>
<dbReference type="Gene3D" id="3.30.420.40">
    <property type="match status" value="2"/>
</dbReference>
<dbReference type="Gene3D" id="3.90.640.10">
    <property type="entry name" value="Actin, Chain A, domain 4"/>
    <property type="match status" value="1"/>
</dbReference>
<dbReference type="Gene3D" id="2.60.34.10">
    <property type="entry name" value="Substrate Binding Domain Of DNAk, Chain A, domain 1"/>
    <property type="match status" value="1"/>
</dbReference>
<dbReference type="HAMAP" id="MF_00332">
    <property type="entry name" value="DnaK"/>
    <property type="match status" value="1"/>
</dbReference>
<dbReference type="InterPro" id="IPR043129">
    <property type="entry name" value="ATPase_NBD"/>
</dbReference>
<dbReference type="InterPro" id="IPR012725">
    <property type="entry name" value="Chaperone_DnaK"/>
</dbReference>
<dbReference type="InterPro" id="IPR018181">
    <property type="entry name" value="Heat_shock_70_CS"/>
</dbReference>
<dbReference type="InterPro" id="IPR029048">
    <property type="entry name" value="HSP70_C_sf"/>
</dbReference>
<dbReference type="InterPro" id="IPR029047">
    <property type="entry name" value="HSP70_peptide-bd_sf"/>
</dbReference>
<dbReference type="InterPro" id="IPR013126">
    <property type="entry name" value="Hsp_70_fam"/>
</dbReference>
<dbReference type="NCBIfam" id="NF001413">
    <property type="entry name" value="PRK00290.1"/>
    <property type="match status" value="1"/>
</dbReference>
<dbReference type="NCBIfam" id="TIGR02350">
    <property type="entry name" value="prok_dnaK"/>
    <property type="match status" value="1"/>
</dbReference>
<dbReference type="PANTHER" id="PTHR19375">
    <property type="entry name" value="HEAT SHOCK PROTEIN 70KDA"/>
    <property type="match status" value="1"/>
</dbReference>
<dbReference type="Pfam" id="PF00012">
    <property type="entry name" value="HSP70"/>
    <property type="match status" value="1"/>
</dbReference>
<dbReference type="PRINTS" id="PR00301">
    <property type="entry name" value="HEATSHOCK70"/>
</dbReference>
<dbReference type="SUPFAM" id="SSF53067">
    <property type="entry name" value="Actin-like ATPase domain"/>
    <property type="match status" value="2"/>
</dbReference>
<dbReference type="SUPFAM" id="SSF100934">
    <property type="entry name" value="Heat shock protein 70kD (HSP70), C-terminal subdomain"/>
    <property type="match status" value="1"/>
</dbReference>
<dbReference type="SUPFAM" id="SSF100920">
    <property type="entry name" value="Heat shock protein 70kD (HSP70), peptide-binding domain"/>
    <property type="match status" value="1"/>
</dbReference>
<dbReference type="PROSITE" id="PS00297">
    <property type="entry name" value="HSP70_1"/>
    <property type="match status" value="1"/>
</dbReference>
<dbReference type="PROSITE" id="PS00329">
    <property type="entry name" value="HSP70_2"/>
    <property type="match status" value="1"/>
</dbReference>
<dbReference type="PROSITE" id="PS01036">
    <property type="entry name" value="HSP70_3"/>
    <property type="match status" value="1"/>
</dbReference>
<organism>
    <name type="scientific">Psychrobacter sp. (strain PRwf-1)</name>
    <dbReference type="NCBI Taxonomy" id="349106"/>
    <lineage>
        <taxon>Bacteria</taxon>
        <taxon>Pseudomonadati</taxon>
        <taxon>Pseudomonadota</taxon>
        <taxon>Gammaproteobacteria</taxon>
        <taxon>Moraxellales</taxon>
        <taxon>Moraxellaceae</taxon>
        <taxon>Psychrobacter</taxon>
    </lineage>
</organism>
<sequence length="641" mass="69023">MAKTIGIDLGTTNSCVAVMEGDKVKVIENAEGTRTTPSIIAYKDGEILVGQSAKRQAVTNPNNTLYAIKRLIGRRFDDKVVQKDIGMVPYKIVKADNGDAWVEVNDKKMAPPQISAEILQKMKKTAEDYLGEKVTDAVVTVPAYFNDSQRQATKDAGKIAGLNVKRIINEPTAAALAYGMDKKKGDSTVAVYDLGGGTFDVSIIEIADVDGEQQFEVLSTNGDTFLGGEDFDLALIDYLVEEFKKEQNFNLKGDPLAMQRLKEAAEKAKIELSSAQSTEVNLPYITADASGPKHLVVTISRSKLEALTEALVKRTIDPCKVALEDAGLKASDIDDVILVGGQTRMPLVQKTVEEFFGQEPRKDVNPDEAVAVGAAIQGAVLSGDKTDVLLLDVTPLTLGIETMGGVMTGIIEKNTMIPTKKSQVFSTAEDNQPAVTIKVFQGERKVAAQNKLLGEFNLTDIPPAPRGMPQIEVTFDINADGIMNISAKDKGTGKEQSIQIKADSGLSDEEIEQMVRDAEANAAEDEKFAALAQVRNEADGRIHAIQKALKDAEDKVTEEEKSSVETAISDLELAAKEDDHDDIKAKLEALDNAFLPISQKIYAAGQGAEGAAPQADATEANAADDDVVDAEFTEVNEDDKK</sequence>
<evidence type="ECO:0000255" key="1">
    <source>
        <dbReference type="HAMAP-Rule" id="MF_00332"/>
    </source>
</evidence>
<evidence type="ECO:0000256" key="2">
    <source>
        <dbReference type="SAM" id="MobiDB-lite"/>
    </source>
</evidence>
<gene>
    <name evidence="1" type="primary">dnaK</name>
    <name type="ordered locus">PsycPRwf_2371</name>
</gene>
<comment type="function">
    <text evidence="1">Acts as a chaperone.</text>
</comment>
<comment type="induction">
    <text evidence="1">By stress conditions e.g. heat shock.</text>
</comment>
<comment type="similarity">
    <text evidence="1">Belongs to the heat shock protein 70 family.</text>
</comment>
<keyword id="KW-0067">ATP-binding</keyword>
<keyword id="KW-0143">Chaperone</keyword>
<keyword id="KW-0547">Nucleotide-binding</keyword>
<keyword id="KW-0597">Phosphoprotein</keyword>
<keyword id="KW-0346">Stress response</keyword>
<reference key="1">
    <citation type="submission" date="2007-05" db="EMBL/GenBank/DDBJ databases">
        <title>Complete sequence of chromosome of Psychrobacter sp. PRwf-1.</title>
        <authorList>
            <consortium name="US DOE Joint Genome Institute"/>
            <person name="Copeland A."/>
            <person name="Lucas S."/>
            <person name="Lapidus A."/>
            <person name="Barry K."/>
            <person name="Detter J.C."/>
            <person name="Glavina del Rio T."/>
            <person name="Hammon N."/>
            <person name="Israni S."/>
            <person name="Dalin E."/>
            <person name="Tice H."/>
            <person name="Pitluck S."/>
            <person name="Chain P."/>
            <person name="Malfatti S."/>
            <person name="Shin M."/>
            <person name="Vergez L."/>
            <person name="Schmutz J."/>
            <person name="Larimer F."/>
            <person name="Land M."/>
            <person name="Hauser L."/>
            <person name="Kyrpides N."/>
            <person name="Kim E."/>
            <person name="Tiedje J."/>
            <person name="Richardson P."/>
        </authorList>
    </citation>
    <scope>NUCLEOTIDE SEQUENCE [LARGE SCALE GENOMIC DNA]</scope>
    <source>
        <strain>PRwf-1</strain>
    </source>
</reference>
<accession>A5WI20</accession>
<protein>
    <recommendedName>
        <fullName evidence="1">Chaperone protein DnaK</fullName>
    </recommendedName>
    <alternativeName>
        <fullName evidence="1">HSP70</fullName>
    </alternativeName>
    <alternativeName>
        <fullName evidence="1">Heat shock 70 kDa protein</fullName>
    </alternativeName>
    <alternativeName>
        <fullName evidence="1">Heat shock protein 70</fullName>
    </alternativeName>
</protein>
<name>DNAK_PSYWF</name>